<gene>
    <name evidence="1" type="primary">rplF</name>
    <name type="ordered locus">YPN_3844</name>
    <name type="ORF">YP516_4367</name>
</gene>
<feature type="chain" id="PRO_0000265315" description="Large ribosomal subunit protein uL6">
    <location>
        <begin position="1"/>
        <end position="177"/>
    </location>
</feature>
<accession>Q1CCV9</accession>
<accession>D1Q2K6</accession>
<reference key="1">
    <citation type="journal article" date="2006" name="J. Bacteriol.">
        <title>Complete genome sequence of Yersinia pestis strains Antiqua and Nepal516: evidence of gene reduction in an emerging pathogen.</title>
        <authorList>
            <person name="Chain P.S.G."/>
            <person name="Hu P."/>
            <person name="Malfatti S.A."/>
            <person name="Radnedge L."/>
            <person name="Larimer F."/>
            <person name="Vergez L.M."/>
            <person name="Worsham P."/>
            <person name="Chu M.C."/>
            <person name="Andersen G.L."/>
        </authorList>
    </citation>
    <scope>NUCLEOTIDE SEQUENCE [LARGE SCALE GENOMIC DNA]</scope>
    <source>
        <strain>Nepal516</strain>
    </source>
</reference>
<reference key="2">
    <citation type="submission" date="2009-04" db="EMBL/GenBank/DDBJ databases">
        <title>Yersinia pestis Nepal516A whole genome shotgun sequencing project.</title>
        <authorList>
            <person name="Plunkett G. III"/>
            <person name="Anderson B.D."/>
            <person name="Baumler D.J."/>
            <person name="Burland V."/>
            <person name="Cabot E.L."/>
            <person name="Glasner J.D."/>
            <person name="Mau B."/>
            <person name="Neeno-Eckwall E."/>
            <person name="Perna N.T."/>
            <person name="Munk A.C."/>
            <person name="Tapia R."/>
            <person name="Green L.D."/>
            <person name="Rogers Y.C."/>
            <person name="Detter J.C."/>
            <person name="Bruce D.C."/>
            <person name="Brettin T.S."/>
        </authorList>
    </citation>
    <scope>NUCLEOTIDE SEQUENCE [LARGE SCALE GENOMIC DNA]</scope>
    <source>
        <strain>Nepal516</strain>
    </source>
</reference>
<comment type="function">
    <text evidence="1">This protein binds to the 23S rRNA, and is important in its secondary structure. It is located near the subunit interface in the base of the L7/L12 stalk, and near the tRNA binding site of the peptidyltransferase center.</text>
</comment>
<comment type="subunit">
    <text evidence="1">Part of the 50S ribosomal subunit.</text>
</comment>
<comment type="similarity">
    <text evidence="1">Belongs to the universal ribosomal protein uL6 family.</text>
</comment>
<name>RL6_YERPN</name>
<proteinExistence type="inferred from homology"/>
<protein>
    <recommendedName>
        <fullName evidence="1">Large ribosomal subunit protein uL6</fullName>
    </recommendedName>
    <alternativeName>
        <fullName evidence="2">50S ribosomal protein L6</fullName>
    </alternativeName>
</protein>
<dbReference type="EMBL" id="CP000305">
    <property type="protein sequence ID" value="ABG20171.1"/>
    <property type="molecule type" value="Genomic_DNA"/>
</dbReference>
<dbReference type="EMBL" id="ACNQ01000019">
    <property type="protein sequence ID" value="EEO74759.1"/>
    <property type="molecule type" value="Genomic_DNA"/>
</dbReference>
<dbReference type="RefSeq" id="WP_002213334.1">
    <property type="nucleotide sequence ID" value="NZ_ACNQ01000019.1"/>
</dbReference>
<dbReference type="SMR" id="Q1CCV9"/>
<dbReference type="GeneID" id="96663181"/>
<dbReference type="KEGG" id="ypn:YPN_3844"/>
<dbReference type="HOGENOM" id="CLU_065464_1_2_6"/>
<dbReference type="Proteomes" id="UP000008936">
    <property type="component" value="Chromosome"/>
</dbReference>
<dbReference type="GO" id="GO:0022625">
    <property type="term" value="C:cytosolic large ribosomal subunit"/>
    <property type="evidence" value="ECO:0007669"/>
    <property type="project" value="TreeGrafter"/>
</dbReference>
<dbReference type="GO" id="GO:0019843">
    <property type="term" value="F:rRNA binding"/>
    <property type="evidence" value="ECO:0007669"/>
    <property type="project" value="UniProtKB-UniRule"/>
</dbReference>
<dbReference type="GO" id="GO:0003735">
    <property type="term" value="F:structural constituent of ribosome"/>
    <property type="evidence" value="ECO:0007669"/>
    <property type="project" value="InterPro"/>
</dbReference>
<dbReference type="GO" id="GO:0002181">
    <property type="term" value="P:cytoplasmic translation"/>
    <property type="evidence" value="ECO:0007669"/>
    <property type="project" value="TreeGrafter"/>
</dbReference>
<dbReference type="FunFam" id="3.90.930.12:FF:000001">
    <property type="entry name" value="50S ribosomal protein L6"/>
    <property type="match status" value="1"/>
</dbReference>
<dbReference type="FunFam" id="3.90.930.12:FF:000002">
    <property type="entry name" value="50S ribosomal protein L6"/>
    <property type="match status" value="1"/>
</dbReference>
<dbReference type="Gene3D" id="3.90.930.12">
    <property type="entry name" value="Ribosomal protein L6, alpha-beta domain"/>
    <property type="match status" value="2"/>
</dbReference>
<dbReference type="HAMAP" id="MF_01365_B">
    <property type="entry name" value="Ribosomal_uL6_B"/>
    <property type="match status" value="1"/>
</dbReference>
<dbReference type="InterPro" id="IPR000702">
    <property type="entry name" value="Ribosomal_uL6-like"/>
</dbReference>
<dbReference type="InterPro" id="IPR036789">
    <property type="entry name" value="Ribosomal_uL6-like_a/b-dom_sf"/>
</dbReference>
<dbReference type="InterPro" id="IPR020040">
    <property type="entry name" value="Ribosomal_uL6_a/b-dom"/>
</dbReference>
<dbReference type="InterPro" id="IPR019906">
    <property type="entry name" value="Ribosomal_uL6_bac-type"/>
</dbReference>
<dbReference type="InterPro" id="IPR002358">
    <property type="entry name" value="Ribosomal_uL6_CS"/>
</dbReference>
<dbReference type="NCBIfam" id="TIGR03654">
    <property type="entry name" value="L6_bact"/>
    <property type="match status" value="1"/>
</dbReference>
<dbReference type="PANTHER" id="PTHR11655">
    <property type="entry name" value="60S/50S RIBOSOMAL PROTEIN L6/L9"/>
    <property type="match status" value="1"/>
</dbReference>
<dbReference type="PANTHER" id="PTHR11655:SF14">
    <property type="entry name" value="LARGE RIBOSOMAL SUBUNIT PROTEIN UL6M"/>
    <property type="match status" value="1"/>
</dbReference>
<dbReference type="Pfam" id="PF00347">
    <property type="entry name" value="Ribosomal_L6"/>
    <property type="match status" value="2"/>
</dbReference>
<dbReference type="PIRSF" id="PIRSF002162">
    <property type="entry name" value="Ribosomal_L6"/>
    <property type="match status" value="1"/>
</dbReference>
<dbReference type="PRINTS" id="PR00059">
    <property type="entry name" value="RIBOSOMALL6"/>
</dbReference>
<dbReference type="SUPFAM" id="SSF56053">
    <property type="entry name" value="Ribosomal protein L6"/>
    <property type="match status" value="2"/>
</dbReference>
<dbReference type="PROSITE" id="PS00525">
    <property type="entry name" value="RIBOSOMAL_L6_1"/>
    <property type="match status" value="1"/>
</dbReference>
<sequence>MSRVAKAPVVIPAGVEVKLNGQVISIKGKNGELTRTVHSAVEVKQEENTLTFAPREGAVDGWAQAGTTRALLNSMVIGVTEGFTKKLQLVGVGYRAAVKGNVVNLALGFSHPVDHELPAGITAECPTQTEIVLKGADKQVIGQVAADLRAYRRPEPYKGKGVRYADEVVRTKEAKKK</sequence>
<keyword id="KW-0687">Ribonucleoprotein</keyword>
<keyword id="KW-0689">Ribosomal protein</keyword>
<keyword id="KW-0694">RNA-binding</keyword>
<keyword id="KW-0699">rRNA-binding</keyword>
<evidence type="ECO:0000255" key="1">
    <source>
        <dbReference type="HAMAP-Rule" id="MF_01365"/>
    </source>
</evidence>
<evidence type="ECO:0000305" key="2"/>
<organism>
    <name type="scientific">Yersinia pestis bv. Antiqua (strain Nepal516)</name>
    <dbReference type="NCBI Taxonomy" id="377628"/>
    <lineage>
        <taxon>Bacteria</taxon>
        <taxon>Pseudomonadati</taxon>
        <taxon>Pseudomonadota</taxon>
        <taxon>Gammaproteobacteria</taxon>
        <taxon>Enterobacterales</taxon>
        <taxon>Yersiniaceae</taxon>
        <taxon>Yersinia</taxon>
    </lineage>
</organism>